<comment type="miscellaneous">
    <text evidence="2">Present with 1100 molecules/cell in log phase SD medium.</text>
</comment>
<sequence>MDAFSLKKDNRKKFQDKQKLKRKHATPSDRKYRLLNRQKEEKATTEEKDQDQEQPALKSNEDRYYEDPVLEDPHSAVANAELNKVLKDVLKNRLQQNDDATAVNNVANKDTLKIKDLKQMNTDELNRWLGRQNTTSAITAAEPESLVVPIHVQGDHDRAGKKISAPSTDLPEELETDQDFLDGLL</sequence>
<accession>P40022</accession>
<accession>D3DLT3</accession>
<protein>
    <recommendedName>
        <fullName>Uncharacterized protein YER034W</fullName>
    </recommendedName>
</protein>
<evidence type="ECO:0000256" key="1">
    <source>
        <dbReference type="SAM" id="MobiDB-lite"/>
    </source>
</evidence>
<evidence type="ECO:0000269" key="2">
    <source>
    </source>
</evidence>
<evidence type="ECO:0007744" key="3">
    <source>
    </source>
</evidence>
<dbReference type="EMBL" id="U18796">
    <property type="protein sequence ID" value="AAB64569.1"/>
    <property type="molecule type" value="Genomic_DNA"/>
</dbReference>
<dbReference type="EMBL" id="AY692712">
    <property type="protein sequence ID" value="AAT92731.1"/>
    <property type="molecule type" value="Genomic_DNA"/>
</dbReference>
<dbReference type="EMBL" id="BK006939">
    <property type="protein sequence ID" value="DAA07687.1"/>
    <property type="molecule type" value="Genomic_DNA"/>
</dbReference>
<dbReference type="PIR" id="S50537">
    <property type="entry name" value="S50537"/>
</dbReference>
<dbReference type="RefSeq" id="NP_010951.1">
    <property type="nucleotide sequence ID" value="NM_001178925.1"/>
</dbReference>
<dbReference type="BioGRID" id="36769">
    <property type="interactions" value="11"/>
</dbReference>
<dbReference type="FunCoup" id="P40022">
    <property type="interactions" value="46"/>
</dbReference>
<dbReference type="STRING" id="4932.YER034W"/>
<dbReference type="iPTMnet" id="P40022"/>
<dbReference type="PaxDb" id="4932-YER034W"/>
<dbReference type="PeptideAtlas" id="P40022"/>
<dbReference type="EnsemblFungi" id="YER034W_mRNA">
    <property type="protein sequence ID" value="YER034W"/>
    <property type="gene ID" value="YER034W"/>
</dbReference>
<dbReference type="GeneID" id="856756"/>
<dbReference type="KEGG" id="sce:YER034W"/>
<dbReference type="AGR" id="SGD:S000000836"/>
<dbReference type="SGD" id="S000000836">
    <property type="gene designation" value="YER034W"/>
</dbReference>
<dbReference type="VEuPathDB" id="FungiDB:YER034W"/>
<dbReference type="eggNOG" id="ENOG502S8M8">
    <property type="taxonomic scope" value="Eukaryota"/>
</dbReference>
<dbReference type="HOGENOM" id="CLU_125618_0_0_1"/>
<dbReference type="InParanoid" id="P40022"/>
<dbReference type="OMA" id="YRYHEDI"/>
<dbReference type="OrthoDB" id="4069039at2759"/>
<dbReference type="BioCyc" id="YEAST:G3O-30215-MONOMER"/>
<dbReference type="BioGRID-ORCS" id="856756">
    <property type="hits" value="2 hits in 10 CRISPR screens"/>
</dbReference>
<dbReference type="PRO" id="PR:P40022"/>
<dbReference type="Proteomes" id="UP000002311">
    <property type="component" value="Chromosome V"/>
</dbReference>
<dbReference type="RNAct" id="P40022">
    <property type="molecule type" value="protein"/>
</dbReference>
<dbReference type="GO" id="GO:0005737">
    <property type="term" value="C:cytoplasm"/>
    <property type="evidence" value="ECO:0007005"/>
    <property type="project" value="SGD"/>
</dbReference>
<dbReference type="GO" id="GO:0005634">
    <property type="term" value="C:nucleus"/>
    <property type="evidence" value="ECO:0007005"/>
    <property type="project" value="SGD"/>
</dbReference>
<dbReference type="InterPro" id="IPR035303">
    <property type="entry name" value="DUF5364"/>
</dbReference>
<dbReference type="Pfam" id="PF17322">
    <property type="entry name" value="DUF5364"/>
    <property type="match status" value="1"/>
</dbReference>
<reference key="1">
    <citation type="journal article" date="1997" name="Nature">
        <title>The nucleotide sequence of Saccharomyces cerevisiae chromosome V.</title>
        <authorList>
            <person name="Dietrich F.S."/>
            <person name="Mulligan J.T."/>
            <person name="Hennessy K.M."/>
            <person name="Yelton M.A."/>
            <person name="Allen E."/>
            <person name="Araujo R."/>
            <person name="Aviles E."/>
            <person name="Berno A."/>
            <person name="Brennan T."/>
            <person name="Carpenter J."/>
            <person name="Chen E."/>
            <person name="Cherry J.M."/>
            <person name="Chung E."/>
            <person name="Duncan M."/>
            <person name="Guzman E."/>
            <person name="Hartzell G."/>
            <person name="Hunicke-Smith S."/>
            <person name="Hyman R.W."/>
            <person name="Kayser A."/>
            <person name="Komp C."/>
            <person name="Lashkari D."/>
            <person name="Lew H."/>
            <person name="Lin D."/>
            <person name="Mosedale D."/>
            <person name="Nakahara K."/>
            <person name="Namath A."/>
            <person name="Norgren R."/>
            <person name="Oefner P."/>
            <person name="Oh C."/>
            <person name="Petel F.X."/>
            <person name="Roberts D."/>
            <person name="Sehl P."/>
            <person name="Schramm S."/>
            <person name="Shogren T."/>
            <person name="Smith V."/>
            <person name="Taylor P."/>
            <person name="Wei Y."/>
            <person name="Botstein D."/>
            <person name="Davis R.W."/>
        </authorList>
    </citation>
    <scope>NUCLEOTIDE SEQUENCE [LARGE SCALE GENOMIC DNA]</scope>
    <source>
        <strain>ATCC 204508 / S288c</strain>
    </source>
</reference>
<reference key="2">
    <citation type="journal article" date="2014" name="G3 (Bethesda)">
        <title>The reference genome sequence of Saccharomyces cerevisiae: Then and now.</title>
        <authorList>
            <person name="Engel S.R."/>
            <person name="Dietrich F.S."/>
            <person name="Fisk D.G."/>
            <person name="Binkley G."/>
            <person name="Balakrishnan R."/>
            <person name="Costanzo M.C."/>
            <person name="Dwight S.S."/>
            <person name="Hitz B.C."/>
            <person name="Karra K."/>
            <person name="Nash R.S."/>
            <person name="Weng S."/>
            <person name="Wong E.D."/>
            <person name="Lloyd P."/>
            <person name="Skrzypek M.S."/>
            <person name="Miyasato S.R."/>
            <person name="Simison M."/>
            <person name="Cherry J.M."/>
        </authorList>
    </citation>
    <scope>GENOME REANNOTATION</scope>
    <source>
        <strain>ATCC 204508 / S288c</strain>
    </source>
</reference>
<reference key="3">
    <citation type="journal article" date="2007" name="Genome Res.">
        <title>Approaching a complete repository of sequence-verified protein-encoding clones for Saccharomyces cerevisiae.</title>
        <authorList>
            <person name="Hu Y."/>
            <person name="Rolfs A."/>
            <person name="Bhullar B."/>
            <person name="Murthy T.V.S."/>
            <person name="Zhu C."/>
            <person name="Berger M.F."/>
            <person name="Camargo A.A."/>
            <person name="Kelley F."/>
            <person name="McCarron S."/>
            <person name="Jepson D."/>
            <person name="Richardson A."/>
            <person name="Raphael J."/>
            <person name="Moreira D."/>
            <person name="Taycher E."/>
            <person name="Zuo D."/>
            <person name="Mohr S."/>
            <person name="Kane M.F."/>
            <person name="Williamson J."/>
            <person name="Simpson A.J.G."/>
            <person name="Bulyk M.L."/>
            <person name="Harlow E."/>
            <person name="Marsischky G."/>
            <person name="Kolodner R.D."/>
            <person name="LaBaer J."/>
        </authorList>
    </citation>
    <scope>NUCLEOTIDE SEQUENCE [GENOMIC DNA]</scope>
    <source>
        <strain>ATCC 204508 / S288c</strain>
    </source>
</reference>
<reference key="4">
    <citation type="journal article" date="2003" name="Nature">
        <title>Global analysis of protein expression in yeast.</title>
        <authorList>
            <person name="Ghaemmaghami S."/>
            <person name="Huh W.-K."/>
            <person name="Bower K."/>
            <person name="Howson R.W."/>
            <person name="Belle A."/>
            <person name="Dephoure N."/>
            <person name="O'Shea E.K."/>
            <person name="Weissman J.S."/>
        </authorList>
    </citation>
    <scope>LEVEL OF PROTEIN EXPRESSION [LARGE SCALE ANALYSIS]</scope>
</reference>
<reference key="5">
    <citation type="journal article" date="2012" name="Proc. Natl. Acad. Sci. U.S.A.">
        <title>N-terminal acetylome analyses and functional insights of the N-terminal acetyltransferase NatB.</title>
        <authorList>
            <person name="Van Damme P."/>
            <person name="Lasa M."/>
            <person name="Polevoda B."/>
            <person name="Gazquez C."/>
            <person name="Elosegui-Artola A."/>
            <person name="Kim D.S."/>
            <person name="De Juan-Pardo E."/>
            <person name="Demeyer K."/>
            <person name="Hole K."/>
            <person name="Larrea E."/>
            <person name="Timmerman E."/>
            <person name="Prieto J."/>
            <person name="Arnesen T."/>
            <person name="Sherman F."/>
            <person name="Gevaert K."/>
            <person name="Aldabe R."/>
        </authorList>
    </citation>
    <scope>ACETYLATION [LARGE SCALE ANALYSIS] AT MET-1</scope>
    <scope>IDENTIFICATION BY MASS SPECTROMETRY [LARGE SCALE ANALYSIS]</scope>
</reference>
<gene>
    <name type="ordered locus">YER034W</name>
</gene>
<feature type="chain" id="PRO_0000202625" description="Uncharacterized protein YER034W">
    <location>
        <begin position="1"/>
        <end position="185"/>
    </location>
</feature>
<feature type="region of interest" description="Disordered" evidence="1">
    <location>
        <begin position="1"/>
        <end position="71"/>
    </location>
</feature>
<feature type="region of interest" description="Disordered" evidence="1">
    <location>
        <begin position="155"/>
        <end position="185"/>
    </location>
</feature>
<feature type="compositionally biased region" description="Basic and acidic residues" evidence="1">
    <location>
        <begin position="1"/>
        <end position="18"/>
    </location>
</feature>
<feature type="compositionally biased region" description="Basic and acidic residues" evidence="1">
    <location>
        <begin position="26"/>
        <end position="47"/>
    </location>
</feature>
<feature type="compositionally biased region" description="Basic and acidic residues" evidence="1">
    <location>
        <begin position="59"/>
        <end position="71"/>
    </location>
</feature>
<feature type="compositionally biased region" description="Acidic residues" evidence="1">
    <location>
        <begin position="170"/>
        <end position="185"/>
    </location>
</feature>
<feature type="modified residue" description="N-acetylmethionine" evidence="3">
    <location>
        <position position="1"/>
    </location>
</feature>
<keyword id="KW-0007">Acetylation</keyword>
<keyword id="KW-1185">Reference proteome</keyword>
<name>YEM4_YEAST</name>
<organism>
    <name type="scientific">Saccharomyces cerevisiae (strain ATCC 204508 / S288c)</name>
    <name type="common">Baker's yeast</name>
    <dbReference type="NCBI Taxonomy" id="559292"/>
    <lineage>
        <taxon>Eukaryota</taxon>
        <taxon>Fungi</taxon>
        <taxon>Dikarya</taxon>
        <taxon>Ascomycota</taxon>
        <taxon>Saccharomycotina</taxon>
        <taxon>Saccharomycetes</taxon>
        <taxon>Saccharomycetales</taxon>
        <taxon>Saccharomycetaceae</taxon>
        <taxon>Saccharomyces</taxon>
    </lineage>
</organism>
<proteinExistence type="evidence at protein level"/>